<proteinExistence type="evidence at protein level"/>
<keyword id="KW-0002">3D-structure</keyword>
<keyword id="KW-0687">Ribonucleoprotein</keyword>
<keyword id="KW-0689">Ribosomal protein</keyword>
<keyword id="KW-0694">RNA-binding</keyword>
<keyword id="KW-0699">rRNA-binding</keyword>
<protein>
    <recommendedName>
        <fullName evidence="1">Small ribosomal subunit protein uS17</fullName>
    </recommendedName>
    <alternativeName>
        <fullName evidence="2">30S ribosomal protein S17</fullName>
    </alternativeName>
</protein>
<dbReference type="EMBL" id="CP001182">
    <property type="protein sequence ID" value="ACJ42888.1"/>
    <property type="molecule type" value="Genomic_DNA"/>
</dbReference>
<dbReference type="RefSeq" id="WP_001291845.1">
    <property type="nucleotide sequence ID" value="NC_011586.2"/>
</dbReference>
<dbReference type="PDB" id="6V39">
    <property type="method" value="EM"/>
    <property type="resolution" value="3.04 A"/>
    <property type="chains" value="q=1-85"/>
</dbReference>
<dbReference type="PDB" id="6V3A">
    <property type="method" value="EM"/>
    <property type="resolution" value="2.82 A"/>
    <property type="chains" value="q=1-85"/>
</dbReference>
<dbReference type="PDB" id="6V3B">
    <property type="method" value="EM"/>
    <property type="resolution" value="2.91 A"/>
    <property type="chains" value="q=1-85"/>
</dbReference>
<dbReference type="PDB" id="6V3E">
    <property type="method" value="EM"/>
    <property type="resolution" value="4.40 A"/>
    <property type="chains" value="q=1-85"/>
</dbReference>
<dbReference type="PDB" id="7M4U">
    <property type="method" value="EM"/>
    <property type="resolution" value="2.71 A"/>
    <property type="chains" value="q=1-85"/>
</dbReference>
<dbReference type="PDB" id="7M4W">
    <property type="method" value="EM"/>
    <property type="resolution" value="2.55 A"/>
    <property type="chains" value="q=1-85"/>
</dbReference>
<dbReference type="PDB" id="7M4X">
    <property type="method" value="EM"/>
    <property type="resolution" value="2.66 A"/>
    <property type="chains" value="q=1-85"/>
</dbReference>
<dbReference type="PDB" id="7M4Y">
    <property type="method" value="EM"/>
    <property type="resolution" value="2.50 A"/>
    <property type="chains" value="q=1-85"/>
</dbReference>
<dbReference type="PDB" id="7M4Z">
    <property type="method" value="EM"/>
    <property type="resolution" value="2.92 A"/>
    <property type="chains" value="q=1-85"/>
</dbReference>
<dbReference type="PDB" id="7RYF">
    <property type="method" value="EM"/>
    <property type="resolution" value="2.65 A"/>
    <property type="chains" value="q=1-85"/>
</dbReference>
<dbReference type="PDB" id="7RYG">
    <property type="method" value="EM"/>
    <property type="resolution" value="2.38 A"/>
    <property type="chains" value="q=1-85"/>
</dbReference>
<dbReference type="PDB" id="7RYH">
    <property type="method" value="EM"/>
    <property type="resolution" value="2.43 A"/>
    <property type="chains" value="q=1-85"/>
</dbReference>
<dbReference type="PDB" id="7UVV">
    <property type="method" value="EM"/>
    <property type="resolution" value="2.50 A"/>
    <property type="chains" value="q=1-85"/>
</dbReference>
<dbReference type="PDB" id="7UVW">
    <property type="method" value="EM"/>
    <property type="resolution" value="2.37 A"/>
    <property type="chains" value="q=1-85"/>
</dbReference>
<dbReference type="PDB" id="7UVX">
    <property type="method" value="EM"/>
    <property type="resolution" value="2.35 A"/>
    <property type="chains" value="q=1-85"/>
</dbReference>
<dbReference type="PDB" id="7UVY">
    <property type="method" value="EM"/>
    <property type="resolution" value="2.39 A"/>
    <property type="chains" value="q=1-85"/>
</dbReference>
<dbReference type="PDB" id="7UVZ">
    <property type="method" value="EM"/>
    <property type="resolution" value="2.21 A"/>
    <property type="chains" value="q=1-85"/>
</dbReference>
<dbReference type="PDB" id="7UW1">
    <property type="method" value="EM"/>
    <property type="resolution" value="2.21 A"/>
    <property type="chains" value="q=1-85"/>
</dbReference>
<dbReference type="PDBsum" id="6V39"/>
<dbReference type="PDBsum" id="6V3A"/>
<dbReference type="PDBsum" id="6V3B"/>
<dbReference type="PDBsum" id="6V3E"/>
<dbReference type="PDBsum" id="7M4U"/>
<dbReference type="PDBsum" id="7M4W"/>
<dbReference type="PDBsum" id="7M4X"/>
<dbReference type="PDBsum" id="7M4Y"/>
<dbReference type="PDBsum" id="7M4Z"/>
<dbReference type="PDBsum" id="7RYF"/>
<dbReference type="PDBsum" id="7RYG"/>
<dbReference type="PDBsum" id="7RYH"/>
<dbReference type="PDBsum" id="7UVV"/>
<dbReference type="PDBsum" id="7UVW"/>
<dbReference type="PDBsum" id="7UVX"/>
<dbReference type="PDBsum" id="7UVY"/>
<dbReference type="PDBsum" id="7UVZ"/>
<dbReference type="PDBsum" id="7UW1"/>
<dbReference type="EMDB" id="EMD-21030"/>
<dbReference type="EMDB" id="EMD-21031"/>
<dbReference type="EMDB" id="EMD-21032"/>
<dbReference type="EMDB" id="EMD-21034"/>
<dbReference type="EMDB" id="EMD-23666"/>
<dbReference type="EMDB" id="EMD-23668"/>
<dbReference type="EMDB" id="EMD-23669"/>
<dbReference type="EMDB" id="EMD-23670"/>
<dbReference type="EMDB" id="EMD-23671"/>
<dbReference type="EMDB" id="EMD-24738"/>
<dbReference type="EMDB" id="EMD-24739"/>
<dbReference type="EMDB" id="EMD-24740"/>
<dbReference type="EMDB" id="EMD-26817"/>
<dbReference type="EMDB" id="EMD-26818"/>
<dbReference type="EMDB" id="EMD-26819"/>
<dbReference type="EMDB" id="EMD-26820"/>
<dbReference type="EMDB" id="EMD-26821"/>
<dbReference type="EMDB" id="EMD-26822"/>
<dbReference type="SMR" id="B7IA30"/>
<dbReference type="IntAct" id="B7IA30">
    <property type="interactions" value="1"/>
</dbReference>
<dbReference type="GeneID" id="9380825"/>
<dbReference type="KEGG" id="abn:AB57_3521"/>
<dbReference type="HOGENOM" id="CLU_073626_1_1_6"/>
<dbReference type="Proteomes" id="UP000007094">
    <property type="component" value="Chromosome"/>
</dbReference>
<dbReference type="GO" id="GO:0022627">
    <property type="term" value="C:cytosolic small ribosomal subunit"/>
    <property type="evidence" value="ECO:0007669"/>
    <property type="project" value="TreeGrafter"/>
</dbReference>
<dbReference type="GO" id="GO:0019843">
    <property type="term" value="F:rRNA binding"/>
    <property type="evidence" value="ECO:0007669"/>
    <property type="project" value="UniProtKB-UniRule"/>
</dbReference>
<dbReference type="GO" id="GO:0003735">
    <property type="term" value="F:structural constituent of ribosome"/>
    <property type="evidence" value="ECO:0007669"/>
    <property type="project" value="InterPro"/>
</dbReference>
<dbReference type="GO" id="GO:0006412">
    <property type="term" value="P:translation"/>
    <property type="evidence" value="ECO:0007669"/>
    <property type="project" value="UniProtKB-UniRule"/>
</dbReference>
<dbReference type="CDD" id="cd00364">
    <property type="entry name" value="Ribosomal_uS17"/>
    <property type="match status" value="1"/>
</dbReference>
<dbReference type="FunFam" id="2.40.50.140:FF:000014">
    <property type="entry name" value="30S ribosomal protein S17"/>
    <property type="match status" value="1"/>
</dbReference>
<dbReference type="Gene3D" id="2.40.50.140">
    <property type="entry name" value="Nucleic acid-binding proteins"/>
    <property type="match status" value="1"/>
</dbReference>
<dbReference type="HAMAP" id="MF_01345_B">
    <property type="entry name" value="Ribosomal_uS17_B"/>
    <property type="match status" value="1"/>
</dbReference>
<dbReference type="InterPro" id="IPR012340">
    <property type="entry name" value="NA-bd_OB-fold"/>
</dbReference>
<dbReference type="InterPro" id="IPR000266">
    <property type="entry name" value="Ribosomal_uS17"/>
</dbReference>
<dbReference type="InterPro" id="IPR019984">
    <property type="entry name" value="Ribosomal_uS17_bact/chlr"/>
</dbReference>
<dbReference type="InterPro" id="IPR019979">
    <property type="entry name" value="Ribosomal_uS17_CS"/>
</dbReference>
<dbReference type="NCBIfam" id="NF004123">
    <property type="entry name" value="PRK05610.1"/>
    <property type="match status" value="1"/>
</dbReference>
<dbReference type="NCBIfam" id="TIGR03635">
    <property type="entry name" value="uS17_bact"/>
    <property type="match status" value="1"/>
</dbReference>
<dbReference type="PANTHER" id="PTHR10744">
    <property type="entry name" value="40S RIBOSOMAL PROTEIN S11 FAMILY MEMBER"/>
    <property type="match status" value="1"/>
</dbReference>
<dbReference type="PANTHER" id="PTHR10744:SF1">
    <property type="entry name" value="SMALL RIBOSOMAL SUBUNIT PROTEIN US17M"/>
    <property type="match status" value="1"/>
</dbReference>
<dbReference type="Pfam" id="PF00366">
    <property type="entry name" value="Ribosomal_S17"/>
    <property type="match status" value="1"/>
</dbReference>
<dbReference type="PRINTS" id="PR00973">
    <property type="entry name" value="RIBOSOMALS17"/>
</dbReference>
<dbReference type="SUPFAM" id="SSF50249">
    <property type="entry name" value="Nucleic acid-binding proteins"/>
    <property type="match status" value="1"/>
</dbReference>
<dbReference type="PROSITE" id="PS00056">
    <property type="entry name" value="RIBOSOMAL_S17"/>
    <property type="match status" value="1"/>
</dbReference>
<feature type="chain" id="PRO_1000143208" description="Small ribosomal subunit protein uS17">
    <location>
        <begin position="1"/>
        <end position="85"/>
    </location>
</feature>
<feature type="strand" evidence="3">
    <location>
        <begin position="8"/>
        <end position="15"/>
    </location>
</feature>
<feature type="strand" evidence="3">
    <location>
        <begin position="21"/>
        <end position="31"/>
    </location>
</feature>
<feature type="turn" evidence="3">
    <location>
        <begin position="33"/>
        <end position="35"/>
    </location>
</feature>
<feature type="strand" evidence="3">
    <location>
        <begin position="38"/>
        <end position="48"/>
    </location>
</feature>
<feature type="strand" evidence="3">
    <location>
        <begin position="59"/>
        <end position="64"/>
    </location>
</feature>
<feature type="strand" evidence="3">
    <location>
        <begin position="68"/>
        <end position="71"/>
    </location>
</feature>
<feature type="strand" evidence="3">
    <location>
        <begin position="74"/>
        <end position="81"/>
    </location>
</feature>
<comment type="function">
    <text evidence="1">One of the primary rRNA binding proteins, it binds specifically to the 5'-end of 16S ribosomal RNA.</text>
</comment>
<comment type="subunit">
    <text evidence="1">Part of the 30S ribosomal subunit.</text>
</comment>
<comment type="similarity">
    <text evidence="1">Belongs to the universal ribosomal protein uS17 family.</text>
</comment>
<gene>
    <name evidence="1" type="primary">rpsQ</name>
    <name type="ordered locus">AB57_3521</name>
</gene>
<accession>B7IA30</accession>
<reference key="1">
    <citation type="journal article" date="2008" name="J. Bacteriol.">
        <title>Comparative genome sequence analysis of multidrug-resistant Acinetobacter baumannii.</title>
        <authorList>
            <person name="Adams M.D."/>
            <person name="Goglin K."/>
            <person name="Molyneaux N."/>
            <person name="Hujer K.M."/>
            <person name="Lavender H."/>
            <person name="Jamison J.J."/>
            <person name="MacDonald I.J."/>
            <person name="Martin K.M."/>
            <person name="Russo T."/>
            <person name="Campagnari A.A."/>
            <person name="Hujer A.M."/>
            <person name="Bonomo R.A."/>
            <person name="Gill S.R."/>
        </authorList>
    </citation>
    <scope>NUCLEOTIDE SEQUENCE [LARGE SCALE GENOMIC DNA]</scope>
    <source>
        <strain>AB0057</strain>
    </source>
</reference>
<name>RS17_ACIB5</name>
<organism>
    <name type="scientific">Acinetobacter baumannii (strain AB0057)</name>
    <dbReference type="NCBI Taxonomy" id="480119"/>
    <lineage>
        <taxon>Bacteria</taxon>
        <taxon>Pseudomonadati</taxon>
        <taxon>Pseudomonadota</taxon>
        <taxon>Gammaproteobacteria</taxon>
        <taxon>Moraxellales</taxon>
        <taxon>Moraxellaceae</taxon>
        <taxon>Acinetobacter</taxon>
        <taxon>Acinetobacter calcoaceticus/baumannii complex</taxon>
    </lineage>
</organism>
<evidence type="ECO:0000255" key="1">
    <source>
        <dbReference type="HAMAP-Rule" id="MF_01345"/>
    </source>
</evidence>
<evidence type="ECO:0000305" key="2"/>
<evidence type="ECO:0007829" key="3">
    <source>
        <dbReference type="PDB" id="7M4U"/>
    </source>
</evidence>
<sequence length="85" mass="9524">MSEKTVRTLTGKVVSDKMDKSIVVLIERRVQHPLYGKSIRRSTKLHAHDENNVAKIGDVVTIKESRPISKTKAWTLVEVVEAAAE</sequence>